<protein>
    <recommendedName>
        <fullName evidence="1">Porphobilinogen deaminase</fullName>
        <shortName evidence="1">PBG</shortName>
        <ecNumber evidence="1">2.5.1.61</ecNumber>
    </recommendedName>
    <alternativeName>
        <fullName evidence="1">Hydroxymethylbilane synthase</fullName>
        <shortName evidence="1">HMBS</shortName>
    </alternativeName>
    <alternativeName>
        <fullName evidence="1">Pre-uroporphyrinogen synthase</fullName>
    </alternativeName>
</protein>
<reference key="1">
    <citation type="submission" date="2008-10" db="EMBL/GenBank/DDBJ databases">
        <title>Genome sequence of Clostridium botulinum A2 Kyoto.</title>
        <authorList>
            <person name="Shrivastava S."/>
            <person name="Brinkac L.M."/>
            <person name="Brown J.L."/>
            <person name="Bruce D."/>
            <person name="Detter C.C."/>
            <person name="Johnson E.A."/>
            <person name="Munk C.A."/>
            <person name="Smith L.A."/>
            <person name="Smith T.J."/>
            <person name="Sutton G."/>
            <person name="Brettin T.S."/>
        </authorList>
    </citation>
    <scope>NUCLEOTIDE SEQUENCE [LARGE SCALE GENOMIC DNA]</scope>
    <source>
        <strain>Kyoto / Type A2</strain>
    </source>
</reference>
<accession>C1FVB9</accession>
<dbReference type="EC" id="2.5.1.61" evidence="1"/>
<dbReference type="EMBL" id="CP001581">
    <property type="protein sequence ID" value="ACO83420.1"/>
    <property type="molecule type" value="Genomic_DNA"/>
</dbReference>
<dbReference type="RefSeq" id="WP_012703680.1">
    <property type="nucleotide sequence ID" value="NC_012563.1"/>
</dbReference>
<dbReference type="SMR" id="C1FVB9"/>
<dbReference type="KEGG" id="cby:CLM_1068"/>
<dbReference type="eggNOG" id="COG0181">
    <property type="taxonomic scope" value="Bacteria"/>
</dbReference>
<dbReference type="HOGENOM" id="CLU_019704_0_2_9"/>
<dbReference type="UniPathway" id="UPA00251">
    <property type="reaction ID" value="UER00319"/>
</dbReference>
<dbReference type="Proteomes" id="UP000001374">
    <property type="component" value="Chromosome"/>
</dbReference>
<dbReference type="GO" id="GO:0005737">
    <property type="term" value="C:cytoplasm"/>
    <property type="evidence" value="ECO:0007669"/>
    <property type="project" value="TreeGrafter"/>
</dbReference>
<dbReference type="GO" id="GO:0004418">
    <property type="term" value="F:hydroxymethylbilane synthase activity"/>
    <property type="evidence" value="ECO:0007669"/>
    <property type="project" value="UniProtKB-UniRule"/>
</dbReference>
<dbReference type="GO" id="GO:0006782">
    <property type="term" value="P:protoporphyrinogen IX biosynthetic process"/>
    <property type="evidence" value="ECO:0007669"/>
    <property type="project" value="UniProtKB-UniRule"/>
</dbReference>
<dbReference type="FunFam" id="3.40.190.10:FF:000005">
    <property type="entry name" value="Porphobilinogen deaminase"/>
    <property type="match status" value="1"/>
</dbReference>
<dbReference type="Gene3D" id="3.40.190.10">
    <property type="entry name" value="Periplasmic binding protein-like II"/>
    <property type="match status" value="2"/>
</dbReference>
<dbReference type="Gene3D" id="3.30.160.40">
    <property type="entry name" value="Porphobilinogen deaminase, C-terminal domain"/>
    <property type="match status" value="1"/>
</dbReference>
<dbReference type="HAMAP" id="MF_00260">
    <property type="entry name" value="Porphobil_deam"/>
    <property type="match status" value="1"/>
</dbReference>
<dbReference type="InterPro" id="IPR000860">
    <property type="entry name" value="HemC"/>
</dbReference>
<dbReference type="InterPro" id="IPR022417">
    <property type="entry name" value="Porphobilin_deaminase_N"/>
</dbReference>
<dbReference type="InterPro" id="IPR022418">
    <property type="entry name" value="Porphobilinogen_deaminase_C"/>
</dbReference>
<dbReference type="InterPro" id="IPR036803">
    <property type="entry name" value="Porphobilinogen_deaminase_C_sf"/>
</dbReference>
<dbReference type="NCBIfam" id="TIGR00212">
    <property type="entry name" value="hemC"/>
    <property type="match status" value="1"/>
</dbReference>
<dbReference type="PANTHER" id="PTHR11557">
    <property type="entry name" value="PORPHOBILINOGEN DEAMINASE"/>
    <property type="match status" value="1"/>
</dbReference>
<dbReference type="PANTHER" id="PTHR11557:SF0">
    <property type="entry name" value="PORPHOBILINOGEN DEAMINASE"/>
    <property type="match status" value="1"/>
</dbReference>
<dbReference type="Pfam" id="PF01379">
    <property type="entry name" value="Porphobil_deam"/>
    <property type="match status" value="1"/>
</dbReference>
<dbReference type="Pfam" id="PF03900">
    <property type="entry name" value="Porphobil_deamC"/>
    <property type="match status" value="1"/>
</dbReference>
<dbReference type="PIRSF" id="PIRSF001438">
    <property type="entry name" value="4pyrrol_synth_OHMeBilane_synth"/>
    <property type="match status" value="1"/>
</dbReference>
<dbReference type="PRINTS" id="PR00151">
    <property type="entry name" value="PORPHBDMNASE"/>
</dbReference>
<dbReference type="SUPFAM" id="SSF53850">
    <property type="entry name" value="Periplasmic binding protein-like II"/>
    <property type="match status" value="1"/>
</dbReference>
<dbReference type="SUPFAM" id="SSF54782">
    <property type="entry name" value="Porphobilinogen deaminase (hydroxymethylbilane synthase), C-terminal domain"/>
    <property type="match status" value="1"/>
</dbReference>
<comment type="function">
    <text evidence="1">Tetrapolymerization of the monopyrrole PBG into the hydroxymethylbilane pre-uroporphyrinogen in several discrete steps.</text>
</comment>
<comment type="catalytic activity">
    <reaction evidence="1">
        <text>4 porphobilinogen + H2O = hydroxymethylbilane + 4 NH4(+)</text>
        <dbReference type="Rhea" id="RHEA:13185"/>
        <dbReference type="ChEBI" id="CHEBI:15377"/>
        <dbReference type="ChEBI" id="CHEBI:28938"/>
        <dbReference type="ChEBI" id="CHEBI:57845"/>
        <dbReference type="ChEBI" id="CHEBI:58126"/>
        <dbReference type="EC" id="2.5.1.61"/>
    </reaction>
</comment>
<comment type="cofactor">
    <cofactor evidence="1">
        <name>dipyrromethane</name>
        <dbReference type="ChEBI" id="CHEBI:60342"/>
    </cofactor>
    <text evidence="1">Binds 1 dipyrromethane group covalently.</text>
</comment>
<comment type="pathway">
    <text evidence="1">Porphyrin-containing compound metabolism; protoporphyrin-IX biosynthesis; coproporphyrinogen-III from 5-aminolevulinate: step 2/4.</text>
</comment>
<comment type="subunit">
    <text evidence="1">Monomer.</text>
</comment>
<comment type="miscellaneous">
    <text evidence="1">The porphobilinogen subunits are added to the dipyrromethane group.</text>
</comment>
<comment type="similarity">
    <text evidence="1">Belongs to the HMBS family.</text>
</comment>
<gene>
    <name evidence="1" type="primary">hemC</name>
    <name type="ordered locus">CLM_1068</name>
</gene>
<feature type="chain" id="PRO_1000125664" description="Porphobilinogen deaminase">
    <location>
        <begin position="1"/>
        <end position="290"/>
    </location>
</feature>
<feature type="modified residue" description="S-(dipyrrolylmethanemethyl)cysteine" evidence="1">
    <location>
        <position position="237"/>
    </location>
</feature>
<evidence type="ECO:0000255" key="1">
    <source>
        <dbReference type="HAMAP-Rule" id="MF_00260"/>
    </source>
</evidence>
<name>HEM3_CLOBJ</name>
<keyword id="KW-0627">Porphyrin biosynthesis</keyword>
<keyword id="KW-0808">Transferase</keyword>
<proteinExistence type="inferred from homology"/>
<sequence length="290" mass="32838">MNFVIATRRSKLAQVQTEIIIDLLNKKHDIECEKLLIETVGDKILEVSLDKIGGKGLFVKDIEVAMLEQRADAAVHSMKDVPYEMPKGFEIIAIPEREDVRDAFISLDNIKFKDLRKGAKIGTSSRRRAAQLKLLRPDLDIVPIRGNVQTRIEKIKKENLDGIILAVAGLKRVNLDHLITDYFDTKEMVPAIGQGALGIEVMEEHPKKELFKDLDHYNSKICVLAERAFMRELDGDCHSTIGAYASIKDNIMHIIGIFERKNKIIKKEITGTKDQYEKLGISLAEHILKD</sequence>
<organism>
    <name type="scientific">Clostridium botulinum (strain Kyoto / Type A2)</name>
    <dbReference type="NCBI Taxonomy" id="536232"/>
    <lineage>
        <taxon>Bacteria</taxon>
        <taxon>Bacillati</taxon>
        <taxon>Bacillota</taxon>
        <taxon>Clostridia</taxon>
        <taxon>Eubacteriales</taxon>
        <taxon>Clostridiaceae</taxon>
        <taxon>Clostridium</taxon>
    </lineage>
</organism>